<accession>A0A0H2XEK8</accession>
<keyword id="KW-0378">Hydrolase</keyword>
<keyword id="KW-0472">Membrane</keyword>
<keyword id="KW-0645">Protease</keyword>
<keyword id="KW-0732">Signal</keyword>
<keyword id="KW-0812">Transmembrane</keyword>
<keyword id="KW-1133">Transmembrane helix</keyword>
<keyword id="KW-0843">Virulence</keyword>
<organism>
    <name type="scientific">Staphylococcus aureus (strain USA300)</name>
    <dbReference type="NCBI Taxonomy" id="367830"/>
    <lineage>
        <taxon>Bacteria</taxon>
        <taxon>Bacillati</taxon>
        <taxon>Bacillota</taxon>
        <taxon>Bacilli</taxon>
        <taxon>Bacillales</taxon>
        <taxon>Staphylococcaceae</taxon>
        <taxon>Staphylococcus</taxon>
    </lineage>
</organism>
<gene>
    <name type="primary">mroQ</name>
    <name evidence="6" type="ordered locus">SAUSA300_1984</name>
</gene>
<comment type="function">
    <text evidence="2 3">Participates in the regulation of the Agr quorum sensing activity and plays thereby an important role in virulence (PubMed:30833334, PubMed:30833335). Mechanistically, elicits a protease dependent control of Agr activity without playing a role in the processing of the pheromone-precursor AgrD (PubMed:30833335).</text>
</comment>
<comment type="subcellular location">
    <subcellularLocation>
        <location evidence="1">Membrane</location>
        <topology evidence="1">Multi-pass membrane protein</topology>
    </subcellularLocation>
</comment>
<comment type="disruption phenotype">
    <text evidence="2 3">Deletion results in decreased expression and abundance of secreted proteases, hemolysins and toxins, as well increased production of surface associated proteins (PubMed:30833334). A subsequent drastic reduction in proteolysis, hemolysis and pigmentation is observed (PubMed:30833335). In turn, virulence is attenuated (PubMed:30833334, PubMed:30833335).</text>
</comment>
<comment type="similarity">
    <text evidence="4">Belongs to the peptidase U48 family.</text>
</comment>
<name>MROQ_STAA3</name>
<protein>
    <recommendedName>
        <fullName>Membrane-embedded CAAX protease MroQ</fullName>
        <ecNumber evidence="2">3.4.-.-</ecNumber>
    </recommendedName>
</protein>
<sequence length="247" mass="28163">MTRLWASLLTVIIYILSQFLPLLIVKKLPFVQYSGIELTKAVIYIQLVLFLIAATTIILINLKIKNPTKLELEVKEPKKYIIPWALLGFALVMIYQMVVSIVLTQIYGGQQVSPNTEKLIIIARKIPIFIFFVSIIGPLLEEYVFRKVIFGELFNAIKGNRIVAFIIATTVSSLIFALAHNDFKFIPVYFGMGVIFSLAYVWTKRLAVPIIIHMLQNGFVVIFQLLNPEALKKATEQANFIYHIFIP</sequence>
<feature type="signal peptide" evidence="1">
    <location>
        <begin position="1"/>
        <end position="17"/>
    </location>
</feature>
<feature type="chain" id="PRO_0000447406" description="Membrane-embedded CAAX protease MroQ" evidence="1">
    <location>
        <begin position="18"/>
        <end position="247"/>
    </location>
</feature>
<feature type="transmembrane region" description="Helical" evidence="1">
    <location>
        <begin position="42"/>
        <end position="62"/>
    </location>
</feature>
<feature type="transmembrane region" description="Helical" evidence="1">
    <location>
        <begin position="81"/>
        <end position="101"/>
    </location>
</feature>
<feature type="transmembrane region" description="Helical" evidence="1">
    <location>
        <begin position="119"/>
        <end position="139"/>
    </location>
</feature>
<feature type="transmembrane region" description="Helical" evidence="1">
    <location>
        <begin position="162"/>
        <end position="182"/>
    </location>
</feature>
<feature type="transmembrane region" description="Helical" evidence="1">
    <location>
        <begin position="183"/>
        <end position="203"/>
    </location>
</feature>
<feature type="active site" evidence="5">
    <location>
        <position position="141"/>
    </location>
</feature>
<feature type="mutagenesis site" description="About 90% loss of hemolytic activity." evidence="2">
    <original>E</original>
    <variation>A</variation>
    <location>
        <position position="141"/>
    </location>
</feature>
<feature type="mutagenesis site" description="Complete loss of proteolytic and hemolytic activity; in association with A-142." evidence="3">
    <original>E</original>
    <variation>A</variation>
    <location>
        <position position="141"/>
    </location>
</feature>
<feature type="mutagenesis site" description="About 50% loss of hemolytic activity." evidence="2">
    <original>E</original>
    <variation>A</variation>
    <location>
        <position position="142"/>
    </location>
</feature>
<feature type="mutagenesis site" description="Complete loss of proteolytic and hemolytic activity; in association with A-141." evidence="3">
    <original>E</original>
    <variation>A</variation>
    <location>
        <position position="142"/>
    </location>
</feature>
<feature type="mutagenesis site" description="About 90% loss of hemolytic activity." evidence="2">
    <original>H</original>
    <variation>A</variation>
    <location>
        <position position="180"/>
    </location>
</feature>
<dbReference type="EC" id="3.4.-.-" evidence="2"/>
<dbReference type="EMBL" id="CP000255">
    <property type="protein sequence ID" value="ABD20720.1"/>
    <property type="molecule type" value="Genomic_DNA"/>
</dbReference>
<dbReference type="RefSeq" id="WP_000197635.1">
    <property type="nucleotide sequence ID" value="NZ_CP027476.1"/>
</dbReference>
<dbReference type="SMR" id="A0A0H2XEK8"/>
<dbReference type="KEGG" id="saa:SAUSA300_1984"/>
<dbReference type="HOGENOM" id="CLU_079560_0_0_9"/>
<dbReference type="OMA" id="KKQYWWI"/>
<dbReference type="PHI-base" id="PHI:9877"/>
<dbReference type="Proteomes" id="UP000001939">
    <property type="component" value="Chromosome"/>
</dbReference>
<dbReference type="GO" id="GO:0016020">
    <property type="term" value="C:membrane"/>
    <property type="evidence" value="ECO:0007669"/>
    <property type="project" value="UniProtKB-SubCell"/>
</dbReference>
<dbReference type="GO" id="GO:0004175">
    <property type="term" value="F:endopeptidase activity"/>
    <property type="evidence" value="ECO:0007669"/>
    <property type="project" value="UniProtKB-ARBA"/>
</dbReference>
<dbReference type="GO" id="GO:0080120">
    <property type="term" value="P:CAAX-box protein maturation"/>
    <property type="evidence" value="ECO:0007669"/>
    <property type="project" value="UniProtKB-ARBA"/>
</dbReference>
<dbReference type="GO" id="GO:0006508">
    <property type="term" value="P:proteolysis"/>
    <property type="evidence" value="ECO:0007669"/>
    <property type="project" value="UniProtKB-KW"/>
</dbReference>
<dbReference type="InterPro" id="IPR052710">
    <property type="entry name" value="CAAX_protease"/>
</dbReference>
<dbReference type="InterPro" id="IPR003675">
    <property type="entry name" value="Rce1/LyrA-like_dom"/>
</dbReference>
<dbReference type="NCBIfam" id="NF046050">
    <property type="entry name" value="CPBP_fam_MroQ"/>
    <property type="match status" value="1"/>
</dbReference>
<dbReference type="PANTHER" id="PTHR36435:SF6">
    <property type="entry name" value="ABORTIVE INFECTION PROTEIN"/>
    <property type="match status" value="1"/>
</dbReference>
<dbReference type="PANTHER" id="PTHR36435">
    <property type="entry name" value="SLR1288 PROTEIN"/>
    <property type="match status" value="1"/>
</dbReference>
<dbReference type="Pfam" id="PF02517">
    <property type="entry name" value="Rce1-like"/>
    <property type="match status" value="1"/>
</dbReference>
<reference key="1">
    <citation type="journal article" date="2006" name="Lancet">
        <title>Complete genome sequence of USA300, an epidemic clone of community-acquired meticillin-resistant Staphylococcus aureus.</title>
        <authorList>
            <person name="Diep B.A."/>
            <person name="Gill S.R."/>
            <person name="Chang R.F."/>
            <person name="Phan T.H."/>
            <person name="Chen J.H."/>
            <person name="Davidson M.G."/>
            <person name="Lin F."/>
            <person name="Lin J."/>
            <person name="Carleton H.A."/>
            <person name="Mongodin E.F."/>
            <person name="Sensabaugh G.F."/>
            <person name="Perdreau-Remington F."/>
        </authorList>
    </citation>
    <scope>NUCLEOTIDE SEQUENCE [LARGE SCALE GENOMIC DNA]</scope>
    <source>
        <strain>USA300</strain>
    </source>
</reference>
<reference key="2">
    <citation type="journal article" date="2019" name="Infect. Immun.">
        <title>Control of Staphylococcus aureus quorum sensing by a membrane-embedded peptidase.</title>
        <authorList>
            <person name="Cosgriff C.J."/>
            <person name="White C.R."/>
            <person name="Teoh W.P."/>
            <person name="Grayczyk J.P."/>
            <person name="Alonzo F. III"/>
        </authorList>
    </citation>
    <scope>FUNCTION</scope>
    <scope>DISRUPTION PHENOTYPE</scope>
    <scope>MUTAGENESIS OF GLU-141; GLU-142 AND HIS-180</scope>
</reference>
<reference key="3">
    <citation type="journal article" date="2019" name="Infect. Immun.">
        <title>MroQ is a novel Abi-domain protein that influences virulence gene expression in Staphylococcus aureus via modulation of Agr qctivity.</title>
        <authorList>
            <person name="Marroquin S."/>
            <person name="Gimza B."/>
            <person name="Tomlinson B."/>
            <person name="Stein M."/>
            <person name="Frey A."/>
            <person name="Keogh R.A."/>
            <person name="Zapf R."/>
            <person name="Todd D.A."/>
            <person name="Cech N.B."/>
            <person name="Carroll R.K."/>
            <person name="Shaw L.N."/>
        </authorList>
    </citation>
    <scope>FUNCTION</scope>
    <scope>DISRUPTION PHENOTYPE</scope>
    <scope>MUTAGENESIS OF GLU-141 AND GLU-142</scope>
</reference>
<evidence type="ECO:0000255" key="1"/>
<evidence type="ECO:0000269" key="2">
    <source>
    </source>
</evidence>
<evidence type="ECO:0000269" key="3">
    <source>
    </source>
</evidence>
<evidence type="ECO:0000305" key="4"/>
<evidence type="ECO:0000305" key="5">
    <source>
    </source>
</evidence>
<evidence type="ECO:0000312" key="6">
    <source>
        <dbReference type="EMBL" id="ABD20720.1"/>
    </source>
</evidence>
<proteinExistence type="evidence at protein level"/>